<proteinExistence type="inferred from homology"/>
<feature type="chain" id="PRO_0000161735" description="DNA ligase">
    <location>
        <begin position="1"/>
        <end position="720"/>
    </location>
</feature>
<feature type="domain" description="BRCT" evidence="1">
    <location>
        <begin position="619"/>
        <end position="709"/>
    </location>
</feature>
<feature type="region of interest" description="Disordered" evidence="2">
    <location>
        <begin position="220"/>
        <end position="239"/>
    </location>
</feature>
<feature type="active site" description="N6-AMP-lysine intermediate" evidence="1">
    <location>
        <position position="142"/>
    </location>
</feature>
<feature type="binding site" evidence="1">
    <location>
        <begin position="60"/>
        <end position="64"/>
    </location>
    <ligand>
        <name>NAD(+)</name>
        <dbReference type="ChEBI" id="CHEBI:57540"/>
    </ligand>
</feature>
<feature type="binding site" evidence="1">
    <location>
        <begin position="109"/>
        <end position="110"/>
    </location>
    <ligand>
        <name>NAD(+)</name>
        <dbReference type="ChEBI" id="CHEBI:57540"/>
    </ligand>
</feature>
<feature type="binding site" evidence="1">
    <location>
        <position position="140"/>
    </location>
    <ligand>
        <name>NAD(+)</name>
        <dbReference type="ChEBI" id="CHEBI:57540"/>
    </ligand>
</feature>
<feature type="binding site" evidence="1">
    <location>
        <position position="163"/>
    </location>
    <ligand>
        <name>NAD(+)</name>
        <dbReference type="ChEBI" id="CHEBI:57540"/>
    </ligand>
</feature>
<feature type="binding site" evidence="1">
    <location>
        <position position="201"/>
    </location>
    <ligand>
        <name>NAD(+)</name>
        <dbReference type="ChEBI" id="CHEBI:57540"/>
    </ligand>
</feature>
<feature type="binding site" evidence="1">
    <location>
        <position position="320"/>
    </location>
    <ligand>
        <name>NAD(+)</name>
        <dbReference type="ChEBI" id="CHEBI:57540"/>
    </ligand>
</feature>
<feature type="binding site" evidence="1">
    <location>
        <position position="344"/>
    </location>
    <ligand>
        <name>NAD(+)</name>
        <dbReference type="ChEBI" id="CHEBI:57540"/>
    </ligand>
</feature>
<feature type="binding site" evidence="1">
    <location>
        <position position="438"/>
    </location>
    <ligand>
        <name>Zn(2+)</name>
        <dbReference type="ChEBI" id="CHEBI:29105"/>
    </ligand>
</feature>
<feature type="binding site" evidence="1">
    <location>
        <position position="441"/>
    </location>
    <ligand>
        <name>Zn(2+)</name>
        <dbReference type="ChEBI" id="CHEBI:29105"/>
    </ligand>
</feature>
<feature type="binding site" evidence="1">
    <location>
        <position position="456"/>
    </location>
    <ligand>
        <name>Zn(2+)</name>
        <dbReference type="ChEBI" id="CHEBI:29105"/>
    </ligand>
</feature>
<feature type="binding site" evidence="1">
    <location>
        <position position="461"/>
    </location>
    <ligand>
        <name>Zn(2+)</name>
        <dbReference type="ChEBI" id="CHEBI:29105"/>
    </ligand>
</feature>
<gene>
    <name evidence="1" type="primary">ligA</name>
    <name type="ordered locus">aq_633</name>
</gene>
<organism>
    <name type="scientific">Aquifex aeolicus (strain VF5)</name>
    <dbReference type="NCBI Taxonomy" id="224324"/>
    <lineage>
        <taxon>Bacteria</taxon>
        <taxon>Pseudomonadati</taxon>
        <taxon>Aquificota</taxon>
        <taxon>Aquificia</taxon>
        <taxon>Aquificales</taxon>
        <taxon>Aquificaceae</taxon>
        <taxon>Aquifex</taxon>
    </lineage>
</organism>
<comment type="function">
    <text evidence="1 3">DNA ligase that catalyzes the formation of phosphodiester linkages between 5'-phosphoryl and 3'-hydroxyl groups in double-stranded DNA using NAD as a coenzyme and as the energy source for the reaction. It is essential for DNA replication and repair of damaged DNA.</text>
</comment>
<comment type="catalytic activity">
    <reaction evidence="1">
        <text>NAD(+) + (deoxyribonucleotide)n-3'-hydroxyl + 5'-phospho-(deoxyribonucleotide)m = (deoxyribonucleotide)n+m + AMP + beta-nicotinamide D-nucleotide.</text>
        <dbReference type="EC" id="6.5.1.2"/>
    </reaction>
</comment>
<comment type="cofactor">
    <cofactor evidence="3">
        <name>Mn(2+)</name>
        <dbReference type="ChEBI" id="CHEBI:29035"/>
    </cofactor>
    <cofactor evidence="3">
        <name>Mg(2+)</name>
        <dbReference type="ChEBI" id="CHEBI:18420"/>
    </cofactor>
    <text evidence="3">Manganese or magnesium. Has higher activity with manganese.</text>
</comment>
<comment type="similarity">
    <text evidence="1">Belongs to the NAD-dependent DNA ligase family. LigA subfamily.</text>
</comment>
<dbReference type="EC" id="6.5.1.2" evidence="1"/>
<dbReference type="EMBL" id="AE000657">
    <property type="protein sequence ID" value="AAC06838.1"/>
    <property type="molecule type" value="Genomic_DNA"/>
</dbReference>
<dbReference type="PIR" id="D70356">
    <property type="entry name" value="D70356"/>
</dbReference>
<dbReference type="RefSeq" id="NP_213440.1">
    <property type="nucleotide sequence ID" value="NC_000918.1"/>
</dbReference>
<dbReference type="RefSeq" id="WP_010880378.1">
    <property type="nucleotide sequence ID" value="NC_000918.1"/>
</dbReference>
<dbReference type="SMR" id="O66880"/>
<dbReference type="FunCoup" id="O66880">
    <property type="interactions" value="378"/>
</dbReference>
<dbReference type="STRING" id="224324.aq_633"/>
<dbReference type="EnsemblBacteria" id="AAC06838">
    <property type="protein sequence ID" value="AAC06838"/>
    <property type="gene ID" value="aq_633"/>
</dbReference>
<dbReference type="KEGG" id="aae:aq_633"/>
<dbReference type="PATRIC" id="fig|224324.8.peg.515"/>
<dbReference type="eggNOG" id="COG0272">
    <property type="taxonomic scope" value="Bacteria"/>
</dbReference>
<dbReference type="HOGENOM" id="CLU_007764_2_1_0"/>
<dbReference type="InParanoid" id="O66880"/>
<dbReference type="OrthoDB" id="9759736at2"/>
<dbReference type="BRENDA" id="6.5.1.2">
    <property type="organism ID" value="396"/>
</dbReference>
<dbReference type="Proteomes" id="UP000000798">
    <property type="component" value="Chromosome"/>
</dbReference>
<dbReference type="GO" id="GO:0005829">
    <property type="term" value="C:cytosol"/>
    <property type="evidence" value="ECO:0000318"/>
    <property type="project" value="GO_Central"/>
</dbReference>
<dbReference type="GO" id="GO:0003677">
    <property type="term" value="F:DNA binding"/>
    <property type="evidence" value="ECO:0007669"/>
    <property type="project" value="InterPro"/>
</dbReference>
<dbReference type="GO" id="GO:0003911">
    <property type="term" value="F:DNA ligase (NAD+) activity"/>
    <property type="evidence" value="ECO:0000318"/>
    <property type="project" value="GO_Central"/>
</dbReference>
<dbReference type="GO" id="GO:0046872">
    <property type="term" value="F:metal ion binding"/>
    <property type="evidence" value="ECO:0007669"/>
    <property type="project" value="UniProtKB-KW"/>
</dbReference>
<dbReference type="GO" id="GO:0006281">
    <property type="term" value="P:DNA repair"/>
    <property type="evidence" value="ECO:0007669"/>
    <property type="project" value="UniProtKB-KW"/>
</dbReference>
<dbReference type="GO" id="GO:0006260">
    <property type="term" value="P:DNA replication"/>
    <property type="evidence" value="ECO:0007669"/>
    <property type="project" value="UniProtKB-KW"/>
</dbReference>
<dbReference type="CDD" id="cd17748">
    <property type="entry name" value="BRCT_DNA_ligase_like"/>
    <property type="match status" value="1"/>
</dbReference>
<dbReference type="CDD" id="cd00114">
    <property type="entry name" value="LIGANc"/>
    <property type="match status" value="1"/>
</dbReference>
<dbReference type="FunFam" id="1.10.150.20:FF:000006">
    <property type="entry name" value="DNA ligase"/>
    <property type="match status" value="1"/>
</dbReference>
<dbReference type="FunFam" id="1.10.150.20:FF:000007">
    <property type="entry name" value="DNA ligase"/>
    <property type="match status" value="1"/>
</dbReference>
<dbReference type="FunFam" id="1.10.287.610:FF:000002">
    <property type="entry name" value="DNA ligase"/>
    <property type="match status" value="1"/>
</dbReference>
<dbReference type="FunFam" id="2.40.50.140:FF:000012">
    <property type="entry name" value="DNA ligase"/>
    <property type="match status" value="1"/>
</dbReference>
<dbReference type="FunFam" id="3.30.470.30:FF:000001">
    <property type="entry name" value="DNA ligase"/>
    <property type="match status" value="1"/>
</dbReference>
<dbReference type="Gene3D" id="6.20.10.30">
    <property type="match status" value="1"/>
</dbReference>
<dbReference type="Gene3D" id="1.10.150.20">
    <property type="entry name" value="5' to 3' exonuclease, C-terminal subdomain"/>
    <property type="match status" value="2"/>
</dbReference>
<dbReference type="Gene3D" id="3.40.50.10190">
    <property type="entry name" value="BRCT domain"/>
    <property type="match status" value="1"/>
</dbReference>
<dbReference type="Gene3D" id="3.30.470.30">
    <property type="entry name" value="DNA ligase/mRNA capping enzyme"/>
    <property type="match status" value="1"/>
</dbReference>
<dbReference type="Gene3D" id="1.10.287.610">
    <property type="entry name" value="Helix hairpin bin"/>
    <property type="match status" value="1"/>
</dbReference>
<dbReference type="Gene3D" id="2.40.50.140">
    <property type="entry name" value="Nucleic acid-binding proteins"/>
    <property type="match status" value="1"/>
</dbReference>
<dbReference type="HAMAP" id="MF_01588">
    <property type="entry name" value="DNA_ligase_A"/>
    <property type="match status" value="1"/>
</dbReference>
<dbReference type="InterPro" id="IPR001357">
    <property type="entry name" value="BRCT_dom"/>
</dbReference>
<dbReference type="InterPro" id="IPR036420">
    <property type="entry name" value="BRCT_dom_sf"/>
</dbReference>
<dbReference type="InterPro" id="IPR041663">
    <property type="entry name" value="DisA/LigA_HHH"/>
</dbReference>
<dbReference type="InterPro" id="IPR001679">
    <property type="entry name" value="DNA_ligase"/>
</dbReference>
<dbReference type="InterPro" id="IPR018239">
    <property type="entry name" value="DNA_ligase_AS"/>
</dbReference>
<dbReference type="InterPro" id="IPR033136">
    <property type="entry name" value="DNA_ligase_CS"/>
</dbReference>
<dbReference type="InterPro" id="IPR013839">
    <property type="entry name" value="DNAligase_adenylation"/>
</dbReference>
<dbReference type="InterPro" id="IPR013840">
    <property type="entry name" value="DNAligase_N"/>
</dbReference>
<dbReference type="InterPro" id="IPR003583">
    <property type="entry name" value="Hlx-hairpin-Hlx_DNA-bd_motif"/>
</dbReference>
<dbReference type="InterPro" id="IPR012340">
    <property type="entry name" value="NA-bd_OB-fold"/>
</dbReference>
<dbReference type="InterPro" id="IPR004150">
    <property type="entry name" value="NAD_DNA_ligase_OB"/>
</dbReference>
<dbReference type="InterPro" id="IPR010994">
    <property type="entry name" value="RuvA_2-like"/>
</dbReference>
<dbReference type="InterPro" id="IPR004149">
    <property type="entry name" value="Znf_DNAligase_C4"/>
</dbReference>
<dbReference type="NCBIfam" id="TIGR00575">
    <property type="entry name" value="dnlj"/>
    <property type="match status" value="1"/>
</dbReference>
<dbReference type="NCBIfam" id="NF005932">
    <property type="entry name" value="PRK07956.1"/>
    <property type="match status" value="1"/>
</dbReference>
<dbReference type="PANTHER" id="PTHR23389">
    <property type="entry name" value="CHROMOSOME TRANSMISSION FIDELITY FACTOR 18"/>
    <property type="match status" value="1"/>
</dbReference>
<dbReference type="PANTHER" id="PTHR23389:SF9">
    <property type="entry name" value="DNA LIGASE"/>
    <property type="match status" value="1"/>
</dbReference>
<dbReference type="Pfam" id="PF00533">
    <property type="entry name" value="BRCT"/>
    <property type="match status" value="1"/>
</dbReference>
<dbReference type="Pfam" id="PF01653">
    <property type="entry name" value="DNA_ligase_aden"/>
    <property type="match status" value="1"/>
</dbReference>
<dbReference type="Pfam" id="PF03120">
    <property type="entry name" value="DNA_ligase_OB"/>
    <property type="match status" value="1"/>
</dbReference>
<dbReference type="Pfam" id="PF03119">
    <property type="entry name" value="DNA_ligase_ZBD"/>
    <property type="match status" value="1"/>
</dbReference>
<dbReference type="Pfam" id="PF12826">
    <property type="entry name" value="HHH_2"/>
    <property type="match status" value="1"/>
</dbReference>
<dbReference type="Pfam" id="PF14520">
    <property type="entry name" value="HHH_5"/>
    <property type="match status" value="1"/>
</dbReference>
<dbReference type="Pfam" id="PF22745">
    <property type="entry name" value="Nlig-Ia"/>
    <property type="match status" value="1"/>
</dbReference>
<dbReference type="PIRSF" id="PIRSF001604">
    <property type="entry name" value="LigA"/>
    <property type="match status" value="1"/>
</dbReference>
<dbReference type="SMART" id="SM00292">
    <property type="entry name" value="BRCT"/>
    <property type="match status" value="1"/>
</dbReference>
<dbReference type="SMART" id="SM00278">
    <property type="entry name" value="HhH1"/>
    <property type="match status" value="3"/>
</dbReference>
<dbReference type="SMART" id="SM00532">
    <property type="entry name" value="LIGANc"/>
    <property type="match status" value="1"/>
</dbReference>
<dbReference type="SUPFAM" id="SSF52113">
    <property type="entry name" value="BRCT domain"/>
    <property type="match status" value="1"/>
</dbReference>
<dbReference type="SUPFAM" id="SSF56091">
    <property type="entry name" value="DNA ligase/mRNA capping enzyme, catalytic domain"/>
    <property type="match status" value="1"/>
</dbReference>
<dbReference type="SUPFAM" id="SSF50249">
    <property type="entry name" value="Nucleic acid-binding proteins"/>
    <property type="match status" value="1"/>
</dbReference>
<dbReference type="SUPFAM" id="SSF47781">
    <property type="entry name" value="RuvA domain 2-like"/>
    <property type="match status" value="1"/>
</dbReference>
<dbReference type="PROSITE" id="PS50172">
    <property type="entry name" value="BRCT"/>
    <property type="match status" value="1"/>
</dbReference>
<dbReference type="PROSITE" id="PS01055">
    <property type="entry name" value="DNA_LIGASE_N1"/>
    <property type="match status" value="1"/>
</dbReference>
<dbReference type="PROSITE" id="PS01056">
    <property type="entry name" value="DNA_LIGASE_N2"/>
    <property type="match status" value="1"/>
</dbReference>
<evidence type="ECO:0000255" key="1">
    <source>
        <dbReference type="HAMAP-Rule" id="MF_01588"/>
    </source>
</evidence>
<evidence type="ECO:0000256" key="2">
    <source>
        <dbReference type="SAM" id="MobiDB-lite"/>
    </source>
</evidence>
<evidence type="ECO:0000269" key="3">
    <source>
    </source>
</evidence>
<name>DNLJ_AQUAE</name>
<keyword id="KW-0227">DNA damage</keyword>
<keyword id="KW-0234">DNA repair</keyword>
<keyword id="KW-0235">DNA replication</keyword>
<keyword id="KW-0436">Ligase</keyword>
<keyword id="KW-0460">Magnesium</keyword>
<keyword id="KW-0464">Manganese</keyword>
<keyword id="KW-0479">Metal-binding</keyword>
<keyword id="KW-0520">NAD</keyword>
<keyword id="KW-1185">Reference proteome</keyword>
<keyword id="KW-0862">Zinc</keyword>
<reference key="1">
    <citation type="journal article" date="1998" name="Nature">
        <title>The complete genome of the hyperthermophilic bacterium Aquifex aeolicus.</title>
        <authorList>
            <person name="Deckert G."/>
            <person name="Warren P.V."/>
            <person name="Gaasterland T."/>
            <person name="Young W.G."/>
            <person name="Lenox A.L."/>
            <person name="Graham D.E."/>
            <person name="Overbeek R."/>
            <person name="Snead M.A."/>
            <person name="Keller M."/>
            <person name="Aujay M."/>
            <person name="Huber R."/>
            <person name="Feldman R.A."/>
            <person name="Short J.M."/>
            <person name="Olsen G.J."/>
            <person name="Swanson R.V."/>
        </authorList>
    </citation>
    <scope>NUCLEOTIDE SEQUENCE [LARGE SCALE GENOMIC DNA]</scope>
    <source>
        <strain>VF5</strain>
    </source>
</reference>
<reference key="2">
    <citation type="journal article" date="2000" name="Nucleic Acids Res.">
        <title>Ligation reaction specificities of an NAD(+)-dependent DNA ligase from the hyperthermophile Aquifex aeolicus.</title>
        <authorList>
            <person name="Tong J."/>
            <person name="Barany F."/>
            <person name="Cao W."/>
        </authorList>
    </citation>
    <scope>FUNCTION</scope>
    <scope>COFACTOR</scope>
</reference>
<protein>
    <recommendedName>
        <fullName evidence="1">DNA ligase</fullName>
        <ecNumber evidence="1">6.5.1.2</ecNumber>
    </recommendedName>
    <alternativeName>
        <fullName evidence="1">Polydeoxyribonucleotide synthase [NAD(+)]</fullName>
    </alternativeName>
</protein>
<accession>O66880</accession>
<sequence length="720" mass="82318">MFTPEREKELQEKTRELLRKIKDVKVLSFEEAKKLAEDLREVIRYHDYKYYVEANPVIPDYDYDRLFRALKEIEKKYPELITPDSPTQRVASEISGEFPTVKHYTPMLSLDNAYSEDELREFDRRVRQITGLEVVEYAVEPKLDGAGIALVYENDLFVRGATRGDGEYGEDITNNLKTIKTIPLKAEFSRFGIKLAEIRGEVVIRKDEFQKLNKERMEEGLPPFANPRNAAAGSIRQKDPKEVAKRNLEAIVYHLSYVEPPETEPPTHYESLKMLHTLGFKTLFKDTKVCKGIDEVIEYCKEWEKKRDSYPYEIDGMVVKVNDRRLWKVLGYTSHHPRWAIAYKFKPRRAVTKLVDVVFQVGRTGTITPVGKLEPVELGGVTVSSVSLFNEDFIREKDIRIGDWVVVERAGDVIPYVVEVLKEKRTGEEKPVEFPKYCPSCGSELVKLPEEVAIRCINISCPAQSVLRIKHWASRDAMDIRGLGDATIKLLFNRGLAKDVGDLYYLKLTDILKLPGFGEKSAMNLLKAIEESKNRPLDRVLYGLGIRYVGQTTAKKIAEIINSVWDLKDIPLEKLMRLEGIGYKVARSIKEFFNIPQNLEVLKKLEKAGVNLAKKVKEKVADVLKGKTFVFTGTLDCCSREKAGEIVEMLGGKFSNSVTSKTDYLVVGKDPGATKLSKAKKYGVKTITEEEFVNMIKDYVDLEKIKKEDKKEKPKIGRLF</sequence>